<proteinExistence type="evidence at protein level"/>
<reference key="1">
    <citation type="journal article" date="1997" name="Nature">
        <title>The nucleotide sequence of Saccharomyces cerevisiae chromosome XIV and its evolutionary implications.</title>
        <authorList>
            <person name="Philippsen P."/>
            <person name="Kleine K."/>
            <person name="Poehlmann R."/>
            <person name="Duesterhoeft A."/>
            <person name="Hamberg K."/>
            <person name="Hegemann J.H."/>
            <person name="Obermaier B."/>
            <person name="Urrestarazu L.A."/>
            <person name="Aert R."/>
            <person name="Albermann K."/>
            <person name="Altmann R."/>
            <person name="Andre B."/>
            <person name="Baladron V."/>
            <person name="Ballesta J.P.G."/>
            <person name="Becam A.-M."/>
            <person name="Beinhauer J.D."/>
            <person name="Boskovic J."/>
            <person name="Buitrago M.J."/>
            <person name="Bussereau F."/>
            <person name="Coster F."/>
            <person name="Crouzet M."/>
            <person name="D'Angelo M."/>
            <person name="Dal Pero F."/>
            <person name="De Antoni A."/>
            <person name="del Rey F."/>
            <person name="Doignon F."/>
            <person name="Domdey H."/>
            <person name="Dubois E."/>
            <person name="Fiedler T.A."/>
            <person name="Fleig U."/>
            <person name="Floeth M."/>
            <person name="Fritz C."/>
            <person name="Gaillardin C."/>
            <person name="Garcia-Cantalejo J.M."/>
            <person name="Glansdorff N."/>
            <person name="Goffeau A."/>
            <person name="Gueldener U."/>
            <person name="Herbert C.J."/>
            <person name="Heumann K."/>
            <person name="Heuss-Neitzel D."/>
            <person name="Hilbert H."/>
            <person name="Hinni K."/>
            <person name="Iraqui Houssaini I."/>
            <person name="Jacquet M."/>
            <person name="Jimenez A."/>
            <person name="Jonniaux J.-L."/>
            <person name="Karpfinger-Hartl L."/>
            <person name="Lanfranchi G."/>
            <person name="Lepingle A."/>
            <person name="Levesque H."/>
            <person name="Lyck R."/>
            <person name="Maftahi M."/>
            <person name="Mallet L."/>
            <person name="Maurer C.T.C."/>
            <person name="Messenguy F."/>
            <person name="Mewes H.-W."/>
            <person name="Moestl D."/>
            <person name="Nasr F."/>
            <person name="Nicaud J.-M."/>
            <person name="Niedenthal R.K."/>
            <person name="Pandolfo D."/>
            <person name="Pierard A."/>
            <person name="Piravandi E."/>
            <person name="Planta R.J."/>
            <person name="Pohl T.M."/>
            <person name="Purnelle B."/>
            <person name="Rebischung C."/>
            <person name="Remacha M.A."/>
            <person name="Revuelta J.L."/>
            <person name="Rinke M."/>
            <person name="Saiz J.E."/>
            <person name="Sartorello F."/>
            <person name="Scherens B."/>
            <person name="Sen-Gupta M."/>
            <person name="Soler-Mira A."/>
            <person name="Urbanus J.H.M."/>
            <person name="Valle G."/>
            <person name="Van Dyck L."/>
            <person name="Verhasselt P."/>
            <person name="Vierendeels F."/>
            <person name="Vissers S."/>
            <person name="Voet M."/>
            <person name="Volckaert G."/>
            <person name="Wach A."/>
            <person name="Wambutt R."/>
            <person name="Wedler H."/>
            <person name="Zollner A."/>
            <person name="Hani J."/>
        </authorList>
    </citation>
    <scope>NUCLEOTIDE SEQUENCE [LARGE SCALE GENOMIC DNA]</scope>
    <source>
        <strain>ATCC 204508 / S288c</strain>
    </source>
</reference>
<reference key="2">
    <citation type="journal article" date="2014" name="G3 (Bethesda)">
        <title>The reference genome sequence of Saccharomyces cerevisiae: Then and now.</title>
        <authorList>
            <person name="Engel S.R."/>
            <person name="Dietrich F.S."/>
            <person name="Fisk D.G."/>
            <person name="Binkley G."/>
            <person name="Balakrishnan R."/>
            <person name="Costanzo M.C."/>
            <person name="Dwight S.S."/>
            <person name="Hitz B.C."/>
            <person name="Karra K."/>
            <person name="Nash R.S."/>
            <person name="Weng S."/>
            <person name="Wong E.D."/>
            <person name="Lloyd P."/>
            <person name="Skrzypek M.S."/>
            <person name="Miyasato S.R."/>
            <person name="Simison M."/>
            <person name="Cherry J.M."/>
        </authorList>
    </citation>
    <scope>GENOME REANNOTATION</scope>
    <source>
        <strain>ATCC 204508 / S288c</strain>
    </source>
</reference>
<reference key="3">
    <citation type="journal article" date="2003" name="Nature">
        <title>Global analysis of protein expression in yeast.</title>
        <authorList>
            <person name="Ghaemmaghami S."/>
            <person name="Huh W.-K."/>
            <person name="Bower K."/>
            <person name="Howson R.W."/>
            <person name="Belle A."/>
            <person name="Dephoure N."/>
            <person name="O'Shea E.K."/>
            <person name="Weissman J.S."/>
        </authorList>
    </citation>
    <scope>LEVEL OF PROTEIN EXPRESSION [LARGE SCALE ANALYSIS]</scope>
</reference>
<reference key="4">
    <citation type="journal article" date="2022" name="Cell Rep.">
        <title>Zng1 is a GTP-dependent zinc transferase needed for activation of methionine aminopeptidase.</title>
        <authorList>
            <person name="Pasquini M."/>
            <person name="Grosjean N."/>
            <person name="Hixson K.K."/>
            <person name="Nicora C.D."/>
            <person name="Yee E.F."/>
            <person name="Lipton M."/>
            <person name="Blaby I.K."/>
            <person name="Haley J.D."/>
            <person name="Blaby-Haas C.E."/>
        </authorList>
    </citation>
    <scope>FUNCTION</scope>
    <scope>CATALYTIC ACTIVITY</scope>
    <scope>DISRUPTION PHENOTYPE</scope>
    <scope>MUTAGENESIS OF CYS-201</scope>
</reference>
<protein>
    <recommendedName>
        <fullName evidence="4">Zinc-regulated GTPase metalloprotein activator 1</fullName>
        <ecNumber evidence="3">3.6.5.-</ecNumber>
    </recommendedName>
</protein>
<organism>
    <name type="scientific">Saccharomyces cerevisiae (strain ATCC 204508 / S288c)</name>
    <name type="common">Baker's yeast</name>
    <dbReference type="NCBI Taxonomy" id="559292"/>
    <lineage>
        <taxon>Eukaryota</taxon>
        <taxon>Fungi</taxon>
        <taxon>Dikarya</taxon>
        <taxon>Ascomycota</taxon>
        <taxon>Saccharomycotina</taxon>
        <taxon>Saccharomycetes</taxon>
        <taxon>Saccharomycetales</taxon>
        <taxon>Saccharomycetaceae</taxon>
        <taxon>Saccharomyces</taxon>
    </lineage>
</organism>
<comment type="function">
    <text evidence="3">Zinc chaperone that directly transfers zinc cofactor to target metalloproteins, thereby activating them (PubMed:35584675). Catalyzes zinc insertion into the active site of methionine aminopeptidase MAP1, which function to cleave the initiator methionine from polypeptides during or after protein translation (PubMed:35584675). Mechanistically, the N-terminal psi-PxLVp motif binds to the C6H2-type zinc finger of inactive form of MAP1 (PubMed:35584675). After formation of the docked complex, zinc is transferred from the CXCC motif in the GTPase domain of ZNG1 to the zinc binding site in the peptidase domain of MAP1 in a process requiring GTP hydrolysis (PubMed:35584675). GTP/GDP exchange is required for release of active MAP1 (PubMed:35584675).</text>
</comment>
<comment type="catalytic activity">
    <reaction evidence="3">
        <text>GTP + H2O = GDP + phosphate + H(+)</text>
        <dbReference type="Rhea" id="RHEA:19669"/>
        <dbReference type="ChEBI" id="CHEBI:15377"/>
        <dbReference type="ChEBI" id="CHEBI:15378"/>
        <dbReference type="ChEBI" id="CHEBI:37565"/>
        <dbReference type="ChEBI" id="CHEBI:43474"/>
        <dbReference type="ChEBI" id="CHEBI:58189"/>
    </reaction>
    <physiologicalReaction direction="left-to-right" evidence="3">
        <dbReference type="Rhea" id="RHEA:19670"/>
    </physiologicalReaction>
</comment>
<comment type="disruption phenotype">
    <text evidence="3">Impaired response to zinc deficiency.</text>
</comment>
<comment type="miscellaneous">
    <text evidence="2">Present with 1560 molecules/cell in log phase SD medium.</text>
</comment>
<comment type="similarity">
    <text evidence="5">Belongs to the SIMIBI class G3E GTPase family. ZNG1 subfamily.</text>
</comment>
<dbReference type="EC" id="3.6.5.-" evidence="3"/>
<dbReference type="EMBL" id="Z71644">
    <property type="protein sequence ID" value="CAA96309.1"/>
    <property type="molecule type" value="Genomic_DNA"/>
</dbReference>
<dbReference type="EMBL" id="BK006947">
    <property type="protein sequence ID" value="DAA10569.1"/>
    <property type="molecule type" value="Genomic_DNA"/>
</dbReference>
<dbReference type="PIR" id="S63360">
    <property type="entry name" value="S63360"/>
</dbReference>
<dbReference type="RefSeq" id="NP_014426.3">
    <property type="nucleotide sequence ID" value="NM_001183206.3"/>
</dbReference>
<dbReference type="SMR" id="P53729"/>
<dbReference type="BioGRID" id="35853">
    <property type="interactions" value="66"/>
</dbReference>
<dbReference type="DIP" id="DIP-1976N"/>
<dbReference type="FunCoup" id="P53729">
    <property type="interactions" value="357"/>
</dbReference>
<dbReference type="IntAct" id="P53729">
    <property type="interactions" value="28"/>
</dbReference>
<dbReference type="MINT" id="P53729"/>
<dbReference type="STRING" id="4932.YNR029C"/>
<dbReference type="iPTMnet" id="P53729"/>
<dbReference type="PaxDb" id="4932-YNR029C"/>
<dbReference type="PeptideAtlas" id="P53729"/>
<dbReference type="EnsemblFungi" id="YNR029C_mRNA">
    <property type="protein sequence ID" value="YNR029C"/>
    <property type="gene ID" value="YNR029C"/>
</dbReference>
<dbReference type="GeneID" id="855763"/>
<dbReference type="KEGG" id="sce:YNR029C"/>
<dbReference type="AGR" id="SGD:S000005312"/>
<dbReference type="SGD" id="S000005312">
    <property type="gene designation" value="ZNG1"/>
</dbReference>
<dbReference type="VEuPathDB" id="FungiDB:YNR029C"/>
<dbReference type="eggNOG" id="KOG2743">
    <property type="taxonomic scope" value="Eukaryota"/>
</dbReference>
<dbReference type="GeneTree" id="ENSGT00940000174884"/>
<dbReference type="HOGENOM" id="CLU_017452_6_0_1"/>
<dbReference type="InParanoid" id="P53729"/>
<dbReference type="OMA" id="GHSHMDP"/>
<dbReference type="OrthoDB" id="258627at2759"/>
<dbReference type="BioCyc" id="YEAST:G3O-33341-MONOMER"/>
<dbReference type="BioGRID-ORCS" id="855763">
    <property type="hits" value="2 hits in 10 CRISPR screens"/>
</dbReference>
<dbReference type="PRO" id="PR:P53729"/>
<dbReference type="Proteomes" id="UP000002311">
    <property type="component" value="Chromosome XIV"/>
</dbReference>
<dbReference type="RNAct" id="P53729">
    <property type="molecule type" value="protein"/>
</dbReference>
<dbReference type="GO" id="GO:0005737">
    <property type="term" value="C:cytoplasm"/>
    <property type="evidence" value="ECO:0007005"/>
    <property type="project" value="SGD"/>
</dbReference>
<dbReference type="GO" id="GO:0008047">
    <property type="term" value="F:enzyme activator activity"/>
    <property type="evidence" value="ECO:0000314"/>
    <property type="project" value="SGD"/>
</dbReference>
<dbReference type="GO" id="GO:0005525">
    <property type="term" value="F:GTP binding"/>
    <property type="evidence" value="ECO:0007669"/>
    <property type="project" value="UniProtKB-KW"/>
</dbReference>
<dbReference type="GO" id="GO:0003924">
    <property type="term" value="F:GTPase activity"/>
    <property type="evidence" value="ECO:0000314"/>
    <property type="project" value="UniProtKB"/>
</dbReference>
<dbReference type="GO" id="GO:0046872">
    <property type="term" value="F:metal ion binding"/>
    <property type="evidence" value="ECO:0007669"/>
    <property type="project" value="UniProtKB-KW"/>
</dbReference>
<dbReference type="GO" id="GO:0140827">
    <property type="term" value="F:zinc chaperone activity"/>
    <property type="evidence" value="ECO:0000314"/>
    <property type="project" value="UniProtKB"/>
</dbReference>
<dbReference type="GO" id="GO:0034224">
    <property type="term" value="P:cellular response to zinc ion starvation"/>
    <property type="evidence" value="ECO:0000315"/>
    <property type="project" value="SGD"/>
</dbReference>
<dbReference type="GO" id="GO:0051604">
    <property type="term" value="P:protein maturation"/>
    <property type="evidence" value="ECO:0000315"/>
    <property type="project" value="SGD"/>
</dbReference>
<dbReference type="CDD" id="cd03112">
    <property type="entry name" value="CobW-like"/>
    <property type="match status" value="1"/>
</dbReference>
<dbReference type="FunFam" id="3.40.50.300:FF:002345">
    <property type="entry name" value="YNR029C-like protein"/>
    <property type="match status" value="1"/>
</dbReference>
<dbReference type="Gene3D" id="3.30.1220.10">
    <property type="entry name" value="CobW-like, C-terminal domain"/>
    <property type="match status" value="1"/>
</dbReference>
<dbReference type="Gene3D" id="3.40.50.300">
    <property type="entry name" value="P-loop containing nucleotide triphosphate hydrolases"/>
    <property type="match status" value="1"/>
</dbReference>
<dbReference type="InterPro" id="IPR036627">
    <property type="entry name" value="CobW-likC_sf"/>
</dbReference>
<dbReference type="InterPro" id="IPR011629">
    <property type="entry name" value="CobW-like_C"/>
</dbReference>
<dbReference type="InterPro" id="IPR003495">
    <property type="entry name" value="CobW/HypB/UreG_nucleotide-bd"/>
</dbReference>
<dbReference type="InterPro" id="IPR027417">
    <property type="entry name" value="P-loop_NTPase"/>
</dbReference>
<dbReference type="InterPro" id="IPR051316">
    <property type="entry name" value="Zinc-reg_GTPase_activator"/>
</dbReference>
<dbReference type="PANTHER" id="PTHR13748">
    <property type="entry name" value="COBW-RELATED"/>
    <property type="match status" value="1"/>
</dbReference>
<dbReference type="PANTHER" id="PTHR13748:SF31">
    <property type="entry name" value="ZINC-REGULATED GTPASE METALLOPROTEIN ACTIVATOR 1A-RELATED"/>
    <property type="match status" value="1"/>
</dbReference>
<dbReference type="Pfam" id="PF02492">
    <property type="entry name" value="cobW"/>
    <property type="match status" value="1"/>
</dbReference>
<dbReference type="Pfam" id="PF07683">
    <property type="entry name" value="CobW_C"/>
    <property type="match status" value="1"/>
</dbReference>
<dbReference type="SUPFAM" id="SSF90002">
    <property type="entry name" value="Hypothetical protein YjiA, C-terminal domain"/>
    <property type="match status" value="1"/>
</dbReference>
<dbReference type="SUPFAM" id="SSF52540">
    <property type="entry name" value="P-loop containing nucleoside triphosphate hydrolases"/>
    <property type="match status" value="1"/>
</dbReference>
<feature type="chain" id="PRO_0000203476" description="Zinc-regulated GTPase metalloprotein activator 1">
    <location>
        <begin position="1"/>
        <end position="429"/>
    </location>
</feature>
<feature type="domain" description="CobW C-terminal">
    <location>
        <begin position="362"/>
        <end position="428"/>
    </location>
</feature>
<feature type="short sequence motif" description="psi-PxLVp motif" evidence="3">
    <location>
        <begin position="15"/>
        <end position="22"/>
    </location>
</feature>
<feature type="short sequence motif" description="CXCC motif" evidence="3">
    <location>
        <begin position="136"/>
        <end position="139"/>
    </location>
</feature>
<feature type="binding site" evidence="1">
    <location>
        <begin position="78"/>
        <end position="85"/>
    </location>
    <ligand>
        <name>GTP</name>
        <dbReference type="ChEBI" id="CHEBI:37565"/>
    </ligand>
</feature>
<feature type="binding site" evidence="6">
    <location>
        <position position="136"/>
    </location>
    <ligand>
        <name>Zn(2+)</name>
        <dbReference type="ChEBI" id="CHEBI:29105"/>
    </ligand>
</feature>
<feature type="binding site" evidence="6">
    <location>
        <position position="138"/>
    </location>
    <ligand>
        <name>Zn(2+)</name>
        <dbReference type="ChEBI" id="CHEBI:29105"/>
    </ligand>
</feature>
<feature type="binding site" evidence="1">
    <location>
        <begin position="139"/>
        <end position="143"/>
    </location>
    <ligand>
        <name>GTP</name>
        <dbReference type="ChEBI" id="CHEBI:37565"/>
    </ligand>
</feature>
<feature type="binding site" evidence="6">
    <location>
        <position position="139"/>
    </location>
    <ligand>
        <name>Zn(2+)</name>
        <dbReference type="ChEBI" id="CHEBI:29105"/>
    </ligand>
</feature>
<feature type="binding site" evidence="1">
    <location>
        <begin position="244"/>
        <end position="247"/>
    </location>
    <ligand>
        <name>GTP</name>
        <dbReference type="ChEBI" id="CHEBI:37565"/>
    </ligand>
</feature>
<feature type="mutagenesis site" description="Abolished interaction with MAP1." evidence="3">
    <original>C</original>
    <variation>S</variation>
    <location>
        <position position="201"/>
    </location>
</feature>
<gene>
    <name evidence="4 7" type="primary">ZNG1</name>
    <name type="ordered locus">YNR029C</name>
    <name type="ORF">N3260</name>
</gene>
<keyword id="KW-0143">Chaperone</keyword>
<keyword id="KW-0342">GTP-binding</keyword>
<keyword id="KW-0378">Hydrolase</keyword>
<keyword id="KW-0479">Metal-binding</keyword>
<keyword id="KW-0547">Nucleotide-binding</keyword>
<keyword id="KW-1185">Reference proteome</keyword>
<keyword id="KW-0862">Zinc</keyword>
<evidence type="ECO:0000255" key="1"/>
<evidence type="ECO:0000269" key="2">
    <source>
    </source>
</evidence>
<evidence type="ECO:0000269" key="3">
    <source>
    </source>
</evidence>
<evidence type="ECO:0000303" key="4">
    <source>
    </source>
</evidence>
<evidence type="ECO:0000305" key="5"/>
<evidence type="ECO:0000305" key="6">
    <source>
    </source>
</evidence>
<evidence type="ECO:0000312" key="7">
    <source>
        <dbReference type="SGD" id="S000005312"/>
    </source>
</evidence>
<name>ZNG1_YEAST</name>
<accession>P53729</accession>
<accession>D6W1K3</accession>
<sequence>MSALRNIKFNEEEDGELPCLVTGEENNLQEILENVSYDGGNIVSDAKVERVNKQVENTSAGATDVHEKKRIPVSIITGYLGSGKSTLLEKIALKGADKKIAVILNEFGDSSEIEKAMTIKNGSNSYQEWLDLGNGCLCCSLKNIGVKAIEDMVERSPGKIDYILLETSGIADPAPIAKMFWQDEGLNSSVYIDGIITVLDCEHILKCLDDISIDAHWHGDKVGLEGNLTIAHFQLAMADRIIMNKYDTIEHSPEMVKQLKERVREINSIAPMFFTKYSDTPIQNLLDIHAYDSVRISDILDSGSGNGTIHDDRMGTIMLTFRPLKNEEEYNNKFIKQFLQPLLWKNFGAMTVLGGRRRDDGRDWEVQRTKGLILIEGENPIARVIQGVRDTYDVFPGKYDGSNKECKIVLIGKYLEKESIEELLRKTLE</sequence>